<protein>
    <recommendedName>
        <fullName evidence="3">Olfactory receptor 3A10</fullName>
    </recommendedName>
    <alternativeName>
        <fullName evidence="4">Odorant receptor M5</fullName>
    </alternativeName>
    <alternativeName>
        <fullName>Olfactory receptor 1</fullName>
    </alternativeName>
    <alternativeName>
        <fullName evidence="4">Olfactory receptor 139</fullName>
    </alternativeName>
    <alternativeName>
        <fullName evidence="4">Olfactory receptor 255-2</fullName>
    </alternativeName>
</protein>
<keyword id="KW-1003">Cell membrane</keyword>
<keyword id="KW-1015">Disulfide bond</keyword>
<keyword id="KW-0297">G-protein coupled receptor</keyword>
<keyword id="KW-0325">Glycoprotein</keyword>
<keyword id="KW-0472">Membrane</keyword>
<keyword id="KW-0552">Olfaction</keyword>
<keyword id="KW-0675">Receptor</keyword>
<keyword id="KW-1185">Reference proteome</keyword>
<keyword id="KW-0716">Sensory transduction</keyword>
<keyword id="KW-0807">Transducer</keyword>
<keyword id="KW-0812">Transmembrane</keyword>
<keyword id="KW-1133">Transmembrane helix</keyword>
<sequence>MEPGAWGNRTAVTDFILLGLTGNVRLQPILFVVFFFAYIVTVGGNLSILAAIFVEPKLHTPMYYFLGNLSLLDIGCISVTVPPMLVCLLAHECRVPYAACISQLFFFHLLAGVDCHLLTAMAYDRYLAICQPLTYSTRMSREVQGTLVGICCTVSFINALTHTVAVSVLDFCGPNVVNHFYCDLPPLFQLSCSSIYLNGQLLFVGATFMGVVPMILISVSYAHVAAAVLRIRSTEGRKKAFSTCGSHLTVVCIFYGTGFFSYMRLGSVSASDKDKGIGILNTILSPMLNPLIYSLRNPDVQGALKRVLTGKRYPV</sequence>
<gene>
    <name evidence="4" type="primary">Or3a10</name>
    <name evidence="4" type="synonym">Mor255-2</name>
    <name type="synonym">Olfr1</name>
    <name evidence="4" type="synonym">Olfr139</name>
</gene>
<feature type="chain" id="PRO_0000150816" description="Olfactory receptor 3A10">
    <location>
        <begin position="1"/>
        <end position="315"/>
    </location>
</feature>
<feature type="topological domain" description="Extracellular" evidence="1">
    <location>
        <begin position="1"/>
        <end position="28"/>
    </location>
</feature>
<feature type="transmembrane region" description="Helical; Name=1" evidence="1">
    <location>
        <begin position="29"/>
        <end position="49"/>
    </location>
</feature>
<feature type="topological domain" description="Cytoplasmic" evidence="1">
    <location>
        <begin position="50"/>
        <end position="68"/>
    </location>
</feature>
<feature type="transmembrane region" description="Helical; Name=2" evidence="1">
    <location>
        <begin position="69"/>
        <end position="89"/>
    </location>
</feature>
<feature type="topological domain" description="Extracellular" evidence="1">
    <location>
        <begin position="90"/>
        <end position="97"/>
    </location>
</feature>
<feature type="transmembrane region" description="Helical; Name=3" evidence="1">
    <location>
        <begin position="98"/>
        <end position="118"/>
    </location>
</feature>
<feature type="topological domain" description="Cytoplasmic" evidence="1">
    <location>
        <begin position="119"/>
        <end position="145"/>
    </location>
</feature>
<feature type="transmembrane region" description="Helical; Name=4" evidence="1">
    <location>
        <begin position="146"/>
        <end position="166"/>
    </location>
</feature>
<feature type="topological domain" description="Extracellular" evidence="1">
    <location>
        <begin position="167"/>
        <end position="200"/>
    </location>
</feature>
<feature type="transmembrane region" description="Helical; Name=5" evidence="1">
    <location>
        <begin position="201"/>
        <end position="221"/>
    </location>
</feature>
<feature type="topological domain" description="Cytoplasmic" evidence="1">
    <location>
        <begin position="222"/>
        <end position="239"/>
    </location>
</feature>
<feature type="transmembrane region" description="Helical; Name=6" evidence="1">
    <location>
        <begin position="240"/>
        <end position="260"/>
    </location>
</feature>
<feature type="topological domain" description="Extracellular" evidence="1">
    <location>
        <begin position="261"/>
        <end position="274"/>
    </location>
</feature>
<feature type="transmembrane region" description="Helical; Name=7" evidence="1">
    <location>
        <begin position="275"/>
        <end position="295"/>
    </location>
</feature>
<feature type="topological domain" description="Cytoplasmic" evidence="1">
    <location>
        <begin position="296"/>
        <end position="315"/>
    </location>
</feature>
<feature type="glycosylation site" description="N-linked (GlcNAc...) asparagine" evidence="1">
    <location>
        <position position="8"/>
    </location>
</feature>
<feature type="disulfide bond" evidence="2">
    <location>
        <begin position="100"/>
        <end position="192"/>
    </location>
</feature>
<feature type="sequence conflict" description="In Ref. 6 and 7." evidence="3" ref="6 7">
    <original>T</original>
    <variation>Q</variation>
    <location>
        <position position="146"/>
    </location>
</feature>
<evidence type="ECO:0000255" key="1"/>
<evidence type="ECO:0000255" key="2">
    <source>
        <dbReference type="PROSITE-ProRule" id="PRU00521"/>
    </source>
</evidence>
<evidence type="ECO:0000305" key="3"/>
<evidence type="ECO:0000312" key="4">
    <source>
        <dbReference type="MGI" id="MGI:2177522"/>
    </source>
</evidence>
<proteinExistence type="evidence at transcript level"/>
<organism>
    <name type="scientific">Mus musculus</name>
    <name type="common">Mouse</name>
    <dbReference type="NCBI Taxonomy" id="10090"/>
    <lineage>
        <taxon>Eukaryota</taxon>
        <taxon>Metazoa</taxon>
        <taxon>Chordata</taxon>
        <taxon>Craniata</taxon>
        <taxon>Vertebrata</taxon>
        <taxon>Euteleostomi</taxon>
        <taxon>Mammalia</taxon>
        <taxon>Eutheria</taxon>
        <taxon>Euarchontoglires</taxon>
        <taxon>Glires</taxon>
        <taxon>Rodentia</taxon>
        <taxon>Myomorpha</taxon>
        <taxon>Muroidea</taxon>
        <taxon>Muridae</taxon>
        <taxon>Murinae</taxon>
        <taxon>Mus</taxon>
        <taxon>Mus</taxon>
    </lineage>
</organism>
<reference key="1">
    <citation type="journal article" date="2002" name="Nat. Neurosci.">
        <title>The olfactory receptor gene superfamily of the mouse.</title>
        <authorList>
            <person name="Zhang X."/>
            <person name="Firestein S."/>
        </authorList>
    </citation>
    <scope>NUCLEOTIDE SEQUENCE [GENOMIC DNA]</scope>
</reference>
<reference key="2">
    <citation type="journal article" date="2002" name="Hum. Mol. Genet.">
        <title>Different evolutionary processes shaped the mouse and human olfactory receptor gene families.</title>
        <authorList>
            <person name="Young J.M."/>
            <person name="Friedman C."/>
            <person name="Williams E.M."/>
            <person name="Ross J.A."/>
            <person name="Tonnes-Priddy L."/>
            <person name="Trask B.J."/>
        </authorList>
    </citation>
    <scope>NUCLEOTIDE SEQUENCE [GENOMIC DNA]</scope>
</reference>
<reference key="3">
    <citation type="journal article" date="2002" name="Hum. Mol. Genet.">
        <authorList>
            <person name="Young J.M."/>
            <person name="Friedman C."/>
            <person name="Williams E.M."/>
            <person name="Ross J.A."/>
            <person name="Tonnes-Priddy L."/>
            <person name="Trask B.J."/>
        </authorList>
    </citation>
    <scope>ERRATUM OF PUBMED:11875048</scope>
</reference>
<reference key="4">
    <citation type="journal article" date="2009" name="PLoS Biol.">
        <title>Lineage-specific biology revealed by a finished genome assembly of the mouse.</title>
        <authorList>
            <person name="Church D.M."/>
            <person name="Goodstadt L."/>
            <person name="Hillier L.W."/>
            <person name="Zody M.C."/>
            <person name="Goldstein S."/>
            <person name="She X."/>
            <person name="Bult C.J."/>
            <person name="Agarwala R."/>
            <person name="Cherry J.L."/>
            <person name="DiCuccio M."/>
            <person name="Hlavina W."/>
            <person name="Kapustin Y."/>
            <person name="Meric P."/>
            <person name="Maglott D."/>
            <person name="Birtle Z."/>
            <person name="Marques A.C."/>
            <person name="Graves T."/>
            <person name="Zhou S."/>
            <person name="Teague B."/>
            <person name="Potamousis K."/>
            <person name="Churas C."/>
            <person name="Place M."/>
            <person name="Herschleb J."/>
            <person name="Runnheim R."/>
            <person name="Forrest D."/>
            <person name="Amos-Landgraf J."/>
            <person name="Schwartz D.C."/>
            <person name="Cheng Z."/>
            <person name="Lindblad-Toh K."/>
            <person name="Eichler E.E."/>
            <person name="Ponting C.P."/>
        </authorList>
    </citation>
    <scope>NUCLEOTIDE SEQUENCE [LARGE SCALE GENOMIC DNA]</scope>
    <source>
        <strain>C57BL/6J</strain>
    </source>
</reference>
<reference key="5">
    <citation type="journal article" date="2004" name="Genome Res.">
        <title>The status, quality, and expansion of the NIH full-length cDNA project: the Mammalian Gene Collection (MGC).</title>
        <authorList>
            <consortium name="The MGC Project Team"/>
        </authorList>
    </citation>
    <scope>NUCLEOTIDE SEQUENCE [LARGE SCALE MRNA]</scope>
</reference>
<reference key="6">
    <citation type="journal article" date="2001" name="Genomics">
        <title>Mouse-human orthology relationships in an olfactory receptor gene cluster.</title>
        <authorList>
            <person name="Lapidot M."/>
            <person name="Pilpel Y."/>
            <person name="Gilad Y."/>
            <person name="Falcovitz A."/>
            <person name="Sharon D."/>
            <person name="Haaf T."/>
            <person name="Lancet D."/>
        </authorList>
    </citation>
    <scope>NUCLEOTIDE SEQUENCE [GENOMIC DNA] OF 1-242</scope>
    <source>
        <strain>129S6/SvEvTac</strain>
    </source>
</reference>
<reference key="7">
    <citation type="journal article" date="1996" name="Proc. Natl. Acad. Sci. U.S.A.">
        <title>The chromosomal distribution of mouse odorant receptor genes.</title>
        <authorList>
            <person name="Sullivan S.L."/>
            <person name="Adamson M.C."/>
            <person name="Ressler K.J."/>
            <person name="Kozak C.A."/>
            <person name="Buck L.B."/>
        </authorList>
    </citation>
    <scope>NUCLEOTIDE SEQUENCE [GENOMIC DNA] OF 131-242</scope>
    <source>
        <strain>C57BL/6J</strain>
    </source>
</reference>
<name>O3A10_MOUSE</name>
<accession>Q60891</accession>
<accession>Q8VGR1</accession>
<accession>Q9EPY8</accession>
<dbReference type="EMBL" id="AY073085">
    <property type="protein sequence ID" value="AAL60748.1"/>
    <property type="molecule type" value="Genomic_DNA"/>
</dbReference>
<dbReference type="EMBL" id="AY317501">
    <property type="protein sequence ID" value="AAP70924.1"/>
    <property type="molecule type" value="Genomic_DNA"/>
</dbReference>
<dbReference type="EMBL" id="AL611937">
    <property type="status" value="NOT_ANNOTATED_CDS"/>
    <property type="molecule type" value="Genomic_DNA"/>
</dbReference>
<dbReference type="EMBL" id="BC104101">
    <property type="protein sequence ID" value="AAI04102.1"/>
    <property type="molecule type" value="mRNA"/>
</dbReference>
<dbReference type="EMBL" id="BC104102">
    <property type="protein sequence ID" value="AAI04103.1"/>
    <property type="molecule type" value="mRNA"/>
</dbReference>
<dbReference type="EMBL" id="AF309126">
    <property type="protein sequence ID" value="AAG42796.1"/>
    <property type="molecule type" value="Genomic_DNA"/>
</dbReference>
<dbReference type="EMBL" id="U28780">
    <property type="protein sequence ID" value="AAC52403.1"/>
    <property type="molecule type" value="Genomic_DNA"/>
</dbReference>
<dbReference type="CCDS" id="CCDS25023.1"/>
<dbReference type="RefSeq" id="NP_667214.1">
    <property type="nucleotide sequence ID" value="NM_147003.1"/>
</dbReference>
<dbReference type="SMR" id="Q60891"/>
<dbReference type="FunCoup" id="Q60891">
    <property type="interactions" value="1258"/>
</dbReference>
<dbReference type="STRING" id="10090.ENSMUSP00000148999"/>
<dbReference type="GlyCosmos" id="Q60891">
    <property type="glycosylation" value="1 site, No reported glycans"/>
</dbReference>
<dbReference type="GlyGen" id="Q60891">
    <property type="glycosylation" value="1 site"/>
</dbReference>
<dbReference type="iPTMnet" id="Q60891"/>
<dbReference type="PhosphoSitePlus" id="Q60891"/>
<dbReference type="PaxDb" id="10090-ENSMUSP00000049558"/>
<dbReference type="DNASU" id="259005"/>
<dbReference type="Ensembl" id="ENSMUST00000050678.2">
    <property type="protein sequence ID" value="ENSMUSP00000049558.2"/>
    <property type="gene ID" value="ENSMUSG00000047444.4"/>
</dbReference>
<dbReference type="Ensembl" id="ENSMUST00000206280.2">
    <property type="protein sequence ID" value="ENSMUSP00000146141.2"/>
    <property type="gene ID" value="ENSMUSG00000047444.4"/>
</dbReference>
<dbReference type="Ensembl" id="ENSMUST00000214111.2">
    <property type="protein sequence ID" value="ENSMUSP00000148999.2"/>
    <property type="gene ID" value="ENSMUSG00000047444.4"/>
</dbReference>
<dbReference type="GeneID" id="259005"/>
<dbReference type="KEGG" id="mmu:259005"/>
<dbReference type="UCSC" id="uc007kbj.1">
    <property type="organism name" value="mouse"/>
</dbReference>
<dbReference type="AGR" id="MGI:2177522"/>
<dbReference type="CTD" id="259005"/>
<dbReference type="MGI" id="MGI:2177522">
    <property type="gene designation" value="Or3a10"/>
</dbReference>
<dbReference type="VEuPathDB" id="HostDB:ENSMUSG00000047444"/>
<dbReference type="eggNOG" id="ENOG502RTW6">
    <property type="taxonomic scope" value="Eukaryota"/>
</dbReference>
<dbReference type="GeneTree" id="ENSGT00940000163181"/>
<dbReference type="HOGENOM" id="CLU_012526_8_1_1"/>
<dbReference type="InParanoid" id="Q60891"/>
<dbReference type="OMA" id="MGVFPMI"/>
<dbReference type="OrthoDB" id="9975554at2759"/>
<dbReference type="PhylomeDB" id="Q60891"/>
<dbReference type="TreeFam" id="TF352732"/>
<dbReference type="BioGRID-ORCS" id="259005">
    <property type="hits" value="2 hits in 70 CRISPR screens"/>
</dbReference>
<dbReference type="PRO" id="PR:Q60891"/>
<dbReference type="Proteomes" id="UP000000589">
    <property type="component" value="Chromosome 11"/>
</dbReference>
<dbReference type="RNAct" id="Q60891">
    <property type="molecule type" value="protein"/>
</dbReference>
<dbReference type="Bgee" id="ENSMUSG00000047444">
    <property type="expression patterns" value="Expressed in secondary oocyte and 3 other cell types or tissues"/>
</dbReference>
<dbReference type="GO" id="GO:0016020">
    <property type="term" value="C:membrane"/>
    <property type="evidence" value="ECO:0000247"/>
    <property type="project" value="MGI"/>
</dbReference>
<dbReference type="GO" id="GO:0005886">
    <property type="term" value="C:plasma membrane"/>
    <property type="evidence" value="ECO:0007669"/>
    <property type="project" value="UniProtKB-SubCell"/>
</dbReference>
<dbReference type="GO" id="GO:0004930">
    <property type="term" value="F:G protein-coupled receptor activity"/>
    <property type="evidence" value="ECO:0007669"/>
    <property type="project" value="UniProtKB-KW"/>
</dbReference>
<dbReference type="GO" id="GO:0004984">
    <property type="term" value="F:olfactory receptor activity"/>
    <property type="evidence" value="ECO:0000247"/>
    <property type="project" value="MGI"/>
</dbReference>
<dbReference type="GO" id="GO:0007186">
    <property type="term" value="P:G protein-coupled receptor signaling pathway"/>
    <property type="evidence" value="ECO:0000247"/>
    <property type="project" value="MGI"/>
</dbReference>
<dbReference type="GO" id="GO:0007608">
    <property type="term" value="P:sensory perception of smell"/>
    <property type="evidence" value="ECO:0000247"/>
    <property type="project" value="MGI"/>
</dbReference>
<dbReference type="CDD" id="cd15233">
    <property type="entry name" value="7tmA_OR3A-like"/>
    <property type="match status" value="1"/>
</dbReference>
<dbReference type="FunFam" id="1.20.1070.10:FF:000010">
    <property type="entry name" value="Olfactory receptor"/>
    <property type="match status" value="1"/>
</dbReference>
<dbReference type="Gene3D" id="1.20.1070.10">
    <property type="entry name" value="Rhodopsin 7-helix transmembrane proteins"/>
    <property type="match status" value="1"/>
</dbReference>
<dbReference type="InterPro" id="IPR000276">
    <property type="entry name" value="GPCR_Rhodpsn"/>
</dbReference>
<dbReference type="InterPro" id="IPR017452">
    <property type="entry name" value="GPCR_Rhodpsn_7TM"/>
</dbReference>
<dbReference type="InterPro" id="IPR000725">
    <property type="entry name" value="Olfact_rcpt"/>
</dbReference>
<dbReference type="PANTHER" id="PTHR48001">
    <property type="entry name" value="OLFACTORY RECEPTOR"/>
    <property type="match status" value="1"/>
</dbReference>
<dbReference type="Pfam" id="PF13853">
    <property type="entry name" value="7tm_4"/>
    <property type="match status" value="1"/>
</dbReference>
<dbReference type="PRINTS" id="PR00237">
    <property type="entry name" value="GPCRRHODOPSN"/>
</dbReference>
<dbReference type="PRINTS" id="PR00245">
    <property type="entry name" value="OLFACTORYR"/>
</dbReference>
<dbReference type="SUPFAM" id="SSF81321">
    <property type="entry name" value="Family A G protein-coupled receptor-like"/>
    <property type="match status" value="1"/>
</dbReference>
<dbReference type="PROSITE" id="PS00237">
    <property type="entry name" value="G_PROTEIN_RECEP_F1_1"/>
    <property type="match status" value="1"/>
</dbReference>
<dbReference type="PROSITE" id="PS50262">
    <property type="entry name" value="G_PROTEIN_RECEP_F1_2"/>
    <property type="match status" value="1"/>
</dbReference>
<comment type="function">
    <text evidence="3">Odorant receptor.</text>
</comment>
<comment type="subcellular location">
    <subcellularLocation>
        <location evidence="3">Cell membrane</location>
        <topology evidence="1">Multi-pass membrane protein</topology>
    </subcellularLocation>
</comment>
<comment type="similarity">
    <text evidence="2">Belongs to the G-protein coupled receptor 1 family.</text>
</comment>